<organism>
    <name type="scientific">Symbiobacterium thermophilum (strain DSM 24528 / JCM 14929 / IAM 14863 / T)</name>
    <dbReference type="NCBI Taxonomy" id="292459"/>
    <lineage>
        <taxon>Bacteria</taxon>
        <taxon>Bacillati</taxon>
        <taxon>Bacillota</taxon>
        <taxon>Clostridia</taxon>
        <taxon>Eubacteriales</taxon>
        <taxon>Symbiobacteriaceae</taxon>
        <taxon>Symbiobacterium</taxon>
    </lineage>
</organism>
<name>LEUC_SYMTH</name>
<accession>Q67MJ2</accession>
<proteinExistence type="inferred from homology"/>
<comment type="function">
    <text evidence="1">Catalyzes the isomerization between 2-isopropylmalate and 3-isopropylmalate, via the formation of 2-isopropylmaleate.</text>
</comment>
<comment type="catalytic activity">
    <reaction evidence="1">
        <text>(2R,3S)-3-isopropylmalate = (2S)-2-isopropylmalate</text>
        <dbReference type="Rhea" id="RHEA:32287"/>
        <dbReference type="ChEBI" id="CHEBI:1178"/>
        <dbReference type="ChEBI" id="CHEBI:35121"/>
        <dbReference type="EC" id="4.2.1.33"/>
    </reaction>
</comment>
<comment type="cofactor">
    <cofactor evidence="1">
        <name>[4Fe-4S] cluster</name>
        <dbReference type="ChEBI" id="CHEBI:49883"/>
    </cofactor>
    <text evidence="1">Binds 1 [4Fe-4S] cluster per subunit.</text>
</comment>
<comment type="pathway">
    <text evidence="1">Amino-acid biosynthesis; L-leucine biosynthesis; L-leucine from 3-methyl-2-oxobutanoate: step 2/4.</text>
</comment>
<comment type="subunit">
    <text evidence="1">Heterodimer of LeuC and LeuD.</text>
</comment>
<comment type="similarity">
    <text evidence="1">Belongs to the aconitase/IPM isomerase family. LeuC type 1 subfamily.</text>
</comment>
<dbReference type="EC" id="4.2.1.33" evidence="1"/>
<dbReference type="EMBL" id="AP006840">
    <property type="protein sequence ID" value="BAD41101.1"/>
    <property type="molecule type" value="Genomic_DNA"/>
</dbReference>
<dbReference type="SMR" id="Q67MJ2"/>
<dbReference type="STRING" id="292459.STH2116"/>
<dbReference type="KEGG" id="sth:STH2116"/>
<dbReference type="eggNOG" id="COG0065">
    <property type="taxonomic scope" value="Bacteria"/>
</dbReference>
<dbReference type="HOGENOM" id="CLU_006714_3_4_9"/>
<dbReference type="OrthoDB" id="9764318at2"/>
<dbReference type="UniPathway" id="UPA00048">
    <property type="reaction ID" value="UER00071"/>
</dbReference>
<dbReference type="Proteomes" id="UP000000417">
    <property type="component" value="Chromosome"/>
</dbReference>
<dbReference type="GO" id="GO:0003861">
    <property type="term" value="F:3-isopropylmalate dehydratase activity"/>
    <property type="evidence" value="ECO:0007669"/>
    <property type="project" value="UniProtKB-UniRule"/>
</dbReference>
<dbReference type="GO" id="GO:0051539">
    <property type="term" value="F:4 iron, 4 sulfur cluster binding"/>
    <property type="evidence" value="ECO:0007669"/>
    <property type="project" value="UniProtKB-KW"/>
</dbReference>
<dbReference type="GO" id="GO:0046872">
    <property type="term" value="F:metal ion binding"/>
    <property type="evidence" value="ECO:0007669"/>
    <property type="project" value="UniProtKB-KW"/>
</dbReference>
<dbReference type="GO" id="GO:0009098">
    <property type="term" value="P:L-leucine biosynthetic process"/>
    <property type="evidence" value="ECO:0007669"/>
    <property type="project" value="UniProtKB-UniRule"/>
</dbReference>
<dbReference type="CDD" id="cd01583">
    <property type="entry name" value="IPMI"/>
    <property type="match status" value="1"/>
</dbReference>
<dbReference type="FunFam" id="3.30.499.10:FF:000007">
    <property type="entry name" value="3-isopropylmalate dehydratase large subunit"/>
    <property type="match status" value="1"/>
</dbReference>
<dbReference type="Gene3D" id="3.30.499.10">
    <property type="entry name" value="Aconitase, domain 3"/>
    <property type="match status" value="2"/>
</dbReference>
<dbReference type="HAMAP" id="MF_01026">
    <property type="entry name" value="LeuC_type1"/>
    <property type="match status" value="1"/>
</dbReference>
<dbReference type="InterPro" id="IPR004430">
    <property type="entry name" value="3-IsopropMal_deHydase_lsu"/>
</dbReference>
<dbReference type="InterPro" id="IPR015931">
    <property type="entry name" value="Acnase/IPM_dHydase_lsu_aba_1/3"/>
</dbReference>
<dbReference type="InterPro" id="IPR001030">
    <property type="entry name" value="Acoase/IPM_deHydtase_lsu_aba"/>
</dbReference>
<dbReference type="InterPro" id="IPR018136">
    <property type="entry name" value="Aconitase_4Fe-4S_BS"/>
</dbReference>
<dbReference type="InterPro" id="IPR036008">
    <property type="entry name" value="Aconitase_4Fe-4S_dom"/>
</dbReference>
<dbReference type="InterPro" id="IPR050067">
    <property type="entry name" value="IPM_dehydratase_rel_enz"/>
</dbReference>
<dbReference type="InterPro" id="IPR033941">
    <property type="entry name" value="IPMI_cat"/>
</dbReference>
<dbReference type="NCBIfam" id="TIGR00170">
    <property type="entry name" value="leuC"/>
    <property type="match status" value="1"/>
</dbReference>
<dbReference type="NCBIfam" id="NF004016">
    <property type="entry name" value="PRK05478.1"/>
    <property type="match status" value="1"/>
</dbReference>
<dbReference type="NCBIfam" id="NF009116">
    <property type="entry name" value="PRK12466.1"/>
    <property type="match status" value="1"/>
</dbReference>
<dbReference type="PANTHER" id="PTHR43822:SF9">
    <property type="entry name" value="3-ISOPROPYLMALATE DEHYDRATASE"/>
    <property type="match status" value="1"/>
</dbReference>
<dbReference type="PANTHER" id="PTHR43822">
    <property type="entry name" value="HOMOACONITASE, MITOCHONDRIAL-RELATED"/>
    <property type="match status" value="1"/>
</dbReference>
<dbReference type="Pfam" id="PF00330">
    <property type="entry name" value="Aconitase"/>
    <property type="match status" value="1"/>
</dbReference>
<dbReference type="PRINTS" id="PR00415">
    <property type="entry name" value="ACONITASE"/>
</dbReference>
<dbReference type="SUPFAM" id="SSF53732">
    <property type="entry name" value="Aconitase iron-sulfur domain"/>
    <property type="match status" value="1"/>
</dbReference>
<dbReference type="PROSITE" id="PS00450">
    <property type="entry name" value="ACONITASE_1"/>
    <property type="match status" value="1"/>
</dbReference>
<dbReference type="PROSITE" id="PS01244">
    <property type="entry name" value="ACONITASE_2"/>
    <property type="match status" value="1"/>
</dbReference>
<gene>
    <name evidence="1" type="primary">leuC</name>
    <name type="ordered locus">STH2116</name>
</gene>
<protein>
    <recommendedName>
        <fullName evidence="1">3-isopropylmalate dehydratase large subunit</fullName>
        <ecNumber evidence="1">4.2.1.33</ecNumber>
    </recommendedName>
    <alternativeName>
        <fullName evidence="1">Alpha-IPM isomerase</fullName>
        <shortName evidence="1">IPMI</shortName>
    </alternativeName>
    <alternativeName>
        <fullName evidence="1">Isopropylmalate isomerase</fullName>
    </alternativeName>
</protein>
<keyword id="KW-0004">4Fe-4S</keyword>
<keyword id="KW-0028">Amino-acid biosynthesis</keyword>
<keyword id="KW-0100">Branched-chain amino acid biosynthesis</keyword>
<keyword id="KW-0408">Iron</keyword>
<keyword id="KW-0411">Iron-sulfur</keyword>
<keyword id="KW-0432">Leucine biosynthesis</keyword>
<keyword id="KW-0456">Lyase</keyword>
<keyword id="KW-0479">Metal-binding</keyword>
<keyword id="KW-1185">Reference proteome</keyword>
<sequence length="481" mass="51567">MGQGVIGMSGRTLLDKIWERHVVRREPGKPDLLYIDLHLVHEVTSPQAFEGLRMAGRRVRRPDLTIATMDHNVPTTDRSLPLTDEIAARQMAALERNCSEFGVRLFDLYSPFQGIVHVIGPELGLTQPGLTIVCGDSHTATHGAFGALAFGIGTSEVEHVLATQCLWQHKPKVMEIRVNGKLPPGTTAKDLILGIIGQIGTDGATGYVIEYTGEAIRSLSMEGRMTVCNMSIEAGARAGMIAPDETTFAYLKGRPHAPQGELWEAAVADWRTLASDPDAVYDRVVEFDAGQLAPVVSWGTNPGQVVPVTGRIPDPRDFADPAQRKAAEAALAYMDLEPGTPIQDIRIDRVFIGSCTNGRIEDLRAAAAVVKGRKVAPGVRAMVVPGSGQVKAQAEAEGLDQIFREAGFEWREAGCSMCLGMNPDILAPGERCASTSNRNFEGRQGKGGRTHLVSPAMAAAAAIAGHFVDVRELLAEGGAAR</sequence>
<reference key="1">
    <citation type="journal article" date="2004" name="Nucleic Acids Res.">
        <title>Genome sequence of Symbiobacterium thermophilum, an uncultivable bacterium that depends on microbial commensalism.</title>
        <authorList>
            <person name="Ueda K."/>
            <person name="Yamashita A."/>
            <person name="Ishikawa J."/>
            <person name="Shimada M."/>
            <person name="Watsuji T."/>
            <person name="Morimura K."/>
            <person name="Ikeda H."/>
            <person name="Hattori M."/>
            <person name="Beppu T."/>
        </authorList>
    </citation>
    <scope>NUCLEOTIDE SEQUENCE [LARGE SCALE GENOMIC DNA]</scope>
    <source>
        <strain>DSM 24528 / JCM 14929 / IAM 14863 / T</strain>
    </source>
</reference>
<feature type="chain" id="PRO_0000076827" description="3-isopropylmalate dehydratase large subunit">
    <location>
        <begin position="1"/>
        <end position="481"/>
    </location>
</feature>
<feature type="binding site" evidence="1">
    <location>
        <position position="355"/>
    </location>
    <ligand>
        <name>[4Fe-4S] cluster</name>
        <dbReference type="ChEBI" id="CHEBI:49883"/>
    </ligand>
</feature>
<feature type="binding site" evidence="1">
    <location>
        <position position="415"/>
    </location>
    <ligand>
        <name>[4Fe-4S] cluster</name>
        <dbReference type="ChEBI" id="CHEBI:49883"/>
    </ligand>
</feature>
<feature type="binding site" evidence="1">
    <location>
        <position position="418"/>
    </location>
    <ligand>
        <name>[4Fe-4S] cluster</name>
        <dbReference type="ChEBI" id="CHEBI:49883"/>
    </ligand>
</feature>
<evidence type="ECO:0000255" key="1">
    <source>
        <dbReference type="HAMAP-Rule" id="MF_01026"/>
    </source>
</evidence>